<keyword id="KW-0574">Periplasm</keyword>
<keyword id="KW-0732">Signal</keyword>
<organism>
    <name type="scientific">Salmonella paratyphi A (strain ATCC 9150 / SARB42)</name>
    <dbReference type="NCBI Taxonomy" id="295319"/>
    <lineage>
        <taxon>Bacteria</taxon>
        <taxon>Pseudomonadati</taxon>
        <taxon>Pseudomonadota</taxon>
        <taxon>Gammaproteobacteria</taxon>
        <taxon>Enterobacterales</taxon>
        <taxon>Enterobacteriaceae</taxon>
        <taxon>Salmonella</taxon>
    </lineage>
</organism>
<name>LSRB_SALPA</name>
<protein>
    <recommendedName>
        <fullName>Autoinducer 2-binding protein LsrB</fullName>
        <shortName>AI-2-binding protein LsrB</shortName>
    </recommendedName>
</protein>
<feature type="signal peptide" evidence="2">
    <location>
        <begin position="1"/>
        <end position="26"/>
    </location>
</feature>
<feature type="chain" id="PRO_0000351327" description="Autoinducer 2-binding protein LsrB">
    <location>
        <begin position="27"/>
        <end position="340"/>
    </location>
</feature>
<accession>Q5PJE4</accession>
<dbReference type="EMBL" id="CP000026">
    <property type="protein sequence ID" value="AAV79685.1"/>
    <property type="molecule type" value="Genomic_DNA"/>
</dbReference>
<dbReference type="RefSeq" id="WP_000090734.1">
    <property type="nucleotide sequence ID" value="NC_006511.1"/>
</dbReference>
<dbReference type="SMR" id="Q5PJE4"/>
<dbReference type="KEGG" id="spt:SPA3920"/>
<dbReference type="HOGENOM" id="CLU_037628_3_0_6"/>
<dbReference type="Proteomes" id="UP000008185">
    <property type="component" value="Chromosome"/>
</dbReference>
<dbReference type="GO" id="GO:0043190">
    <property type="term" value="C:ATP-binding cassette (ABC) transporter complex"/>
    <property type="evidence" value="ECO:0007669"/>
    <property type="project" value="InterPro"/>
</dbReference>
<dbReference type="GO" id="GO:0030288">
    <property type="term" value="C:outer membrane-bounded periplasmic space"/>
    <property type="evidence" value="ECO:0007669"/>
    <property type="project" value="TreeGrafter"/>
</dbReference>
<dbReference type="GO" id="GO:0030246">
    <property type="term" value="F:carbohydrate binding"/>
    <property type="evidence" value="ECO:0007669"/>
    <property type="project" value="TreeGrafter"/>
</dbReference>
<dbReference type="CDD" id="cd20003">
    <property type="entry name" value="PBP1_LsrB_Quorum_Sensing"/>
    <property type="match status" value="1"/>
</dbReference>
<dbReference type="Gene3D" id="3.40.50.2300">
    <property type="match status" value="2"/>
</dbReference>
<dbReference type="InterPro" id="IPR050555">
    <property type="entry name" value="Bact_Solute-Bind_Prot2"/>
</dbReference>
<dbReference type="InterPro" id="IPR030159">
    <property type="entry name" value="LsrB"/>
</dbReference>
<dbReference type="InterPro" id="IPR028082">
    <property type="entry name" value="Peripla_BP_I"/>
</dbReference>
<dbReference type="InterPro" id="IPR025997">
    <property type="entry name" value="SBP_2_dom"/>
</dbReference>
<dbReference type="NCBIfam" id="NF011937">
    <property type="entry name" value="PRK15408.1"/>
    <property type="match status" value="1"/>
</dbReference>
<dbReference type="PANTHER" id="PTHR30036:SF7">
    <property type="entry name" value="ABC TRANSPORTER PERIPLASMIC-BINDING PROTEIN YPHF"/>
    <property type="match status" value="1"/>
</dbReference>
<dbReference type="PANTHER" id="PTHR30036">
    <property type="entry name" value="D-XYLOSE-BINDING PERIPLASMIC PROTEIN"/>
    <property type="match status" value="1"/>
</dbReference>
<dbReference type="Pfam" id="PF13407">
    <property type="entry name" value="Peripla_BP_4"/>
    <property type="match status" value="1"/>
</dbReference>
<dbReference type="SUPFAM" id="SSF53822">
    <property type="entry name" value="Periplasmic binding protein-like I"/>
    <property type="match status" value="1"/>
</dbReference>
<proteinExistence type="inferred from homology"/>
<evidence type="ECO:0000250" key="1"/>
<evidence type="ECO:0000255" key="2"/>
<evidence type="ECO:0000305" key="3"/>
<comment type="function">
    <text evidence="1">Part of the ABC transporter complex LsrABCD involved in autoinducer 2 (AI-2) import. Binds AI-2 and delivers it to the LsrC and LsrD permeases (By similarity).</text>
</comment>
<comment type="subunit">
    <text evidence="1">The complex is composed of two ATP-binding proteins (LsrA), two transmembrane proteins (LsrC and LsrD) and a solute-binding protein (LsrB).</text>
</comment>
<comment type="subcellular location">
    <subcellularLocation>
        <location evidence="3">Periplasm</location>
    </subcellularLocation>
</comment>
<comment type="similarity">
    <text evidence="3">Belongs to the bacterial solute-binding protein 2 family.</text>
</comment>
<reference key="1">
    <citation type="journal article" date="2004" name="Nat. Genet.">
        <title>Comparison of genome degradation in Paratyphi A and Typhi, human-restricted serovars of Salmonella enterica that cause typhoid.</title>
        <authorList>
            <person name="McClelland M."/>
            <person name="Sanderson K.E."/>
            <person name="Clifton S.W."/>
            <person name="Latreille P."/>
            <person name="Porwollik S."/>
            <person name="Sabo A."/>
            <person name="Meyer R."/>
            <person name="Bieri T."/>
            <person name="Ozersky P."/>
            <person name="McLellan M."/>
            <person name="Harkins C.R."/>
            <person name="Wang C."/>
            <person name="Nguyen C."/>
            <person name="Berghoff A."/>
            <person name="Elliott G."/>
            <person name="Kohlberg S."/>
            <person name="Strong C."/>
            <person name="Du F."/>
            <person name="Carter J."/>
            <person name="Kremizki C."/>
            <person name="Layman D."/>
            <person name="Leonard S."/>
            <person name="Sun H."/>
            <person name="Fulton L."/>
            <person name="Nash W."/>
            <person name="Miner T."/>
            <person name="Minx P."/>
            <person name="Delehaunty K."/>
            <person name="Fronick C."/>
            <person name="Magrini V."/>
            <person name="Nhan M."/>
            <person name="Warren W."/>
            <person name="Florea L."/>
            <person name="Spieth J."/>
            <person name="Wilson R.K."/>
        </authorList>
    </citation>
    <scope>NUCLEOTIDE SEQUENCE [LARGE SCALE GENOMIC DNA]</scope>
    <source>
        <strain>ATCC 9150 / SARB42</strain>
    </source>
</reference>
<gene>
    <name type="primary">lsrB</name>
    <name type="ordered locus">SPA3920</name>
</gene>
<sequence length="340" mass="36832">MARHSIKMIALLTAFGLASAAMTVQAAERIAFIPKLVGVGFFTSGGNGAQEAGKALGIDVTYDGPTEPSVSGQVQLVNNFVNQEYDAIIVSAVSPDGLCPALKRAMQRGVKILTWDSDTKPECRSYYINQGTPKQLGSMLVEMAAHQVDKEKAKVAFFYSSPTVTDQNQWVKEAKAKISQEHPGWEIVTTQFGYNDATKSLQTAEGIIKAYPDLDAIIAPDANALPAAAQAAENLKRNNLAIVGFSTPNVMRPYVQRGTVKEFGLWDVVQQGKISVYVANALLKNMPMNVGDSLDIPGIGKVTVSPNSEQGYHYEAKGNGIVLLPERVIFNKDNIDKYDF</sequence>